<protein>
    <recommendedName>
        <fullName>Ornithine carbamoyltransferase</fullName>
        <shortName>OTCase</shortName>
        <ecNumber>2.1.3.3</ecNumber>
    </recommendedName>
</protein>
<name>OTC_NEIAN</name>
<sequence length="232" mass="25577">DQGAGVTYLEPTGSQIGHKESIKDTARVLGRMYDGIEYRGFGQEIVEELAQYAGVPVFNGLTNEFHPTQMLADALTMREHSSKPLNEIAFAYVGDARFNMGNSLLLLGAKMGMDVRIGAPKALWPSENIIAQARALAEETGAKVTLTENAEEAVQGVDFIHTDVWVSMGEPKETWEERIALLKSFRVTPELMAASGNPNVKFMHCLPAFHNRETKVGEWIYETFGLNGVEVT</sequence>
<evidence type="ECO:0000250" key="1"/>
<evidence type="ECO:0000305" key="2"/>
<proteinExistence type="inferred from homology"/>
<gene>
    <name type="primary">argF</name>
</gene>
<organism>
    <name type="scientific">Neisseria animalis</name>
    <dbReference type="NCBI Taxonomy" id="492"/>
    <lineage>
        <taxon>Bacteria</taxon>
        <taxon>Pseudomonadati</taxon>
        <taxon>Pseudomonadota</taxon>
        <taxon>Betaproteobacteria</taxon>
        <taxon>Neisseriales</taxon>
        <taxon>Neisseriaceae</taxon>
        <taxon>Neisseria</taxon>
    </lineage>
</organism>
<dbReference type="EC" id="2.1.3.3"/>
<dbReference type="EMBL" id="AJ223904">
    <property type="protein sequence ID" value="CAA11635.1"/>
    <property type="molecule type" value="Genomic_DNA"/>
</dbReference>
<dbReference type="SMR" id="O86376"/>
<dbReference type="UniPathway" id="UPA00068">
    <property type="reaction ID" value="UER00112"/>
</dbReference>
<dbReference type="GO" id="GO:0005737">
    <property type="term" value="C:cytoplasm"/>
    <property type="evidence" value="ECO:0007669"/>
    <property type="project" value="UniProtKB-SubCell"/>
</dbReference>
<dbReference type="GO" id="GO:0016597">
    <property type="term" value="F:amino acid binding"/>
    <property type="evidence" value="ECO:0007669"/>
    <property type="project" value="InterPro"/>
</dbReference>
<dbReference type="GO" id="GO:0004585">
    <property type="term" value="F:ornithine carbamoyltransferase activity"/>
    <property type="evidence" value="ECO:0007669"/>
    <property type="project" value="UniProtKB-EC"/>
</dbReference>
<dbReference type="GO" id="GO:0042450">
    <property type="term" value="P:arginine biosynthetic process via ornithine"/>
    <property type="evidence" value="ECO:0007669"/>
    <property type="project" value="TreeGrafter"/>
</dbReference>
<dbReference type="GO" id="GO:0019240">
    <property type="term" value="P:citrulline biosynthetic process"/>
    <property type="evidence" value="ECO:0007669"/>
    <property type="project" value="TreeGrafter"/>
</dbReference>
<dbReference type="GO" id="GO:0006526">
    <property type="term" value="P:L-arginine biosynthetic process"/>
    <property type="evidence" value="ECO:0007669"/>
    <property type="project" value="UniProtKB-UniPathway"/>
</dbReference>
<dbReference type="FunFam" id="3.40.50.1370:FF:000008">
    <property type="entry name" value="Ornithine carbamoyltransferase"/>
    <property type="match status" value="1"/>
</dbReference>
<dbReference type="Gene3D" id="3.40.50.1370">
    <property type="entry name" value="Aspartate/ornithine carbamoyltransferase"/>
    <property type="match status" value="2"/>
</dbReference>
<dbReference type="InterPro" id="IPR006132">
    <property type="entry name" value="Asp/Orn_carbamoyltranf_P-bd"/>
</dbReference>
<dbReference type="InterPro" id="IPR006130">
    <property type="entry name" value="Asp/Orn_carbamoylTrfase"/>
</dbReference>
<dbReference type="InterPro" id="IPR036901">
    <property type="entry name" value="Asp/Orn_carbamoylTrfase_sf"/>
</dbReference>
<dbReference type="InterPro" id="IPR006131">
    <property type="entry name" value="Asp_carbamoyltransf_Asp/Orn-bd"/>
</dbReference>
<dbReference type="InterPro" id="IPR002292">
    <property type="entry name" value="Orn/put_carbamltrans"/>
</dbReference>
<dbReference type="NCBIfam" id="TIGR00658">
    <property type="entry name" value="orni_carb_tr"/>
    <property type="match status" value="1"/>
</dbReference>
<dbReference type="PANTHER" id="PTHR45753:SF2">
    <property type="entry name" value="ORNITHINE CARBAMOYLTRANSFERASE"/>
    <property type="match status" value="1"/>
</dbReference>
<dbReference type="PANTHER" id="PTHR45753">
    <property type="entry name" value="ORNITHINE CARBAMOYLTRANSFERASE, MITOCHONDRIAL"/>
    <property type="match status" value="1"/>
</dbReference>
<dbReference type="Pfam" id="PF00185">
    <property type="entry name" value="OTCace"/>
    <property type="match status" value="1"/>
</dbReference>
<dbReference type="Pfam" id="PF02729">
    <property type="entry name" value="OTCace_N"/>
    <property type="match status" value="1"/>
</dbReference>
<dbReference type="PRINTS" id="PR00100">
    <property type="entry name" value="AOTCASE"/>
</dbReference>
<dbReference type="PRINTS" id="PR00102">
    <property type="entry name" value="OTCASE"/>
</dbReference>
<dbReference type="SUPFAM" id="SSF53671">
    <property type="entry name" value="Aspartate/ornithine carbamoyltransferase"/>
    <property type="match status" value="1"/>
</dbReference>
<comment type="catalytic activity">
    <reaction>
        <text>carbamoyl phosphate + L-ornithine = L-citrulline + phosphate + H(+)</text>
        <dbReference type="Rhea" id="RHEA:19513"/>
        <dbReference type="ChEBI" id="CHEBI:15378"/>
        <dbReference type="ChEBI" id="CHEBI:43474"/>
        <dbReference type="ChEBI" id="CHEBI:46911"/>
        <dbReference type="ChEBI" id="CHEBI:57743"/>
        <dbReference type="ChEBI" id="CHEBI:58228"/>
        <dbReference type="EC" id="2.1.3.3"/>
    </reaction>
</comment>
<comment type="pathway">
    <text>Amino-acid biosynthesis; L-arginine biosynthesis; L-arginine from L-ornithine and carbamoyl phosphate: step 1/3.</text>
</comment>
<comment type="subcellular location">
    <subcellularLocation>
        <location evidence="1">Cytoplasm</location>
    </subcellularLocation>
</comment>
<comment type="similarity">
    <text evidence="2">Belongs to the aspartate/ornithine carbamoyltransferase superfamily. OTCase family.</text>
</comment>
<feature type="chain" id="PRO_0000112957" description="Ornithine carbamoyltransferase">
    <location>
        <begin position="1" status="less than"/>
        <end position="232" status="greater than"/>
    </location>
</feature>
<feature type="binding site" evidence="1">
    <location>
        <position position="15"/>
    </location>
    <ligand>
        <name>carbamoyl phosphate</name>
        <dbReference type="ChEBI" id="CHEBI:58228"/>
    </ligand>
</feature>
<feature type="binding site" evidence="1">
    <location>
        <position position="39"/>
    </location>
    <ligand>
        <name>carbamoyl phosphate</name>
        <dbReference type="ChEBI" id="CHEBI:58228"/>
    </ligand>
</feature>
<feature type="binding site" evidence="1">
    <location>
        <begin position="66"/>
        <end position="69"/>
    </location>
    <ligand>
        <name>carbamoyl phosphate</name>
        <dbReference type="ChEBI" id="CHEBI:58228"/>
    </ligand>
</feature>
<feature type="binding site" evidence="1">
    <location>
        <position position="99"/>
    </location>
    <ligand>
        <name>L-ornithine</name>
        <dbReference type="ChEBI" id="CHEBI:46911"/>
    </ligand>
</feature>
<feature type="binding site" evidence="1">
    <location>
        <position position="163"/>
    </location>
    <ligand>
        <name>L-ornithine</name>
        <dbReference type="ChEBI" id="CHEBI:46911"/>
    </ligand>
</feature>
<feature type="binding site" evidence="1">
    <location>
        <begin position="167"/>
        <end position="168"/>
    </location>
    <ligand>
        <name>L-ornithine</name>
        <dbReference type="ChEBI" id="CHEBI:46911"/>
    </ligand>
</feature>
<feature type="binding site" evidence="1">
    <location>
        <begin position="204"/>
        <end position="207"/>
    </location>
    <ligand>
        <name>carbamoyl phosphate</name>
        <dbReference type="ChEBI" id="CHEBI:58228"/>
    </ligand>
</feature>
<feature type="binding site" evidence="1">
    <location>
        <position position="232"/>
    </location>
    <ligand>
        <name>carbamoyl phosphate</name>
        <dbReference type="ChEBI" id="CHEBI:58228"/>
    </ligand>
</feature>
<feature type="site" description="Important for structural integrity" evidence="1">
    <location>
        <position position="79"/>
    </location>
</feature>
<feature type="non-terminal residue">
    <location>
        <position position="1"/>
    </location>
</feature>
<feature type="non-terminal residue">
    <location>
        <position position="232"/>
    </location>
</feature>
<accession>O86376</accession>
<keyword id="KW-0028">Amino-acid biosynthesis</keyword>
<keyword id="KW-0055">Arginine biosynthesis</keyword>
<keyword id="KW-0963">Cytoplasm</keyword>
<keyword id="KW-0808">Transferase</keyword>
<reference key="1">
    <citation type="journal article" date="1999" name="Mol. Biol. Evol.">
        <title>Networks and groups within the genus Neisseria: analysis of argF, recA, rho, and 16S rRNA sequences from human Neisseria species.</title>
        <authorList>
            <person name="Smith N.H."/>
            <person name="Holmes E.C."/>
            <person name="Donovan G.M."/>
            <person name="Carpenter G.A."/>
            <person name="Spratt B.G."/>
        </authorList>
    </citation>
    <scope>NUCLEOTIDE SEQUENCE [GENOMIC DNA]</scope>
    <source>
        <strain>ATCC 49930 / CIP 72.15 / NCTC 10212 / NA10</strain>
    </source>
</reference>